<protein>
    <recommendedName>
        <fullName>Uncharacterized membrane protein YoyI</fullName>
    </recommendedName>
</protein>
<reference key="1">
    <citation type="journal article" date="1997" name="Nature">
        <title>The complete genome sequence of the Gram-positive bacterium Bacillus subtilis.</title>
        <authorList>
            <person name="Kunst F."/>
            <person name="Ogasawara N."/>
            <person name="Moszer I."/>
            <person name="Albertini A.M."/>
            <person name="Alloni G."/>
            <person name="Azevedo V."/>
            <person name="Bertero M.G."/>
            <person name="Bessieres P."/>
            <person name="Bolotin A."/>
            <person name="Borchert S."/>
            <person name="Borriss R."/>
            <person name="Boursier L."/>
            <person name="Brans A."/>
            <person name="Braun M."/>
            <person name="Brignell S.C."/>
            <person name="Bron S."/>
            <person name="Brouillet S."/>
            <person name="Bruschi C.V."/>
            <person name="Caldwell B."/>
            <person name="Capuano V."/>
            <person name="Carter N.M."/>
            <person name="Choi S.-K."/>
            <person name="Codani J.-J."/>
            <person name="Connerton I.F."/>
            <person name="Cummings N.J."/>
            <person name="Daniel R.A."/>
            <person name="Denizot F."/>
            <person name="Devine K.M."/>
            <person name="Duesterhoeft A."/>
            <person name="Ehrlich S.D."/>
            <person name="Emmerson P.T."/>
            <person name="Entian K.-D."/>
            <person name="Errington J."/>
            <person name="Fabret C."/>
            <person name="Ferrari E."/>
            <person name="Foulger D."/>
            <person name="Fritz C."/>
            <person name="Fujita M."/>
            <person name="Fujita Y."/>
            <person name="Fuma S."/>
            <person name="Galizzi A."/>
            <person name="Galleron N."/>
            <person name="Ghim S.-Y."/>
            <person name="Glaser P."/>
            <person name="Goffeau A."/>
            <person name="Golightly E.J."/>
            <person name="Grandi G."/>
            <person name="Guiseppi G."/>
            <person name="Guy B.J."/>
            <person name="Haga K."/>
            <person name="Haiech J."/>
            <person name="Harwood C.R."/>
            <person name="Henaut A."/>
            <person name="Hilbert H."/>
            <person name="Holsappel S."/>
            <person name="Hosono S."/>
            <person name="Hullo M.-F."/>
            <person name="Itaya M."/>
            <person name="Jones L.-M."/>
            <person name="Joris B."/>
            <person name="Karamata D."/>
            <person name="Kasahara Y."/>
            <person name="Klaerr-Blanchard M."/>
            <person name="Klein C."/>
            <person name="Kobayashi Y."/>
            <person name="Koetter P."/>
            <person name="Koningstein G."/>
            <person name="Krogh S."/>
            <person name="Kumano M."/>
            <person name="Kurita K."/>
            <person name="Lapidus A."/>
            <person name="Lardinois S."/>
            <person name="Lauber J."/>
            <person name="Lazarevic V."/>
            <person name="Lee S.-M."/>
            <person name="Levine A."/>
            <person name="Liu H."/>
            <person name="Masuda S."/>
            <person name="Mauel C."/>
            <person name="Medigue C."/>
            <person name="Medina N."/>
            <person name="Mellado R.P."/>
            <person name="Mizuno M."/>
            <person name="Moestl D."/>
            <person name="Nakai S."/>
            <person name="Noback M."/>
            <person name="Noone D."/>
            <person name="O'Reilly M."/>
            <person name="Ogawa K."/>
            <person name="Ogiwara A."/>
            <person name="Oudega B."/>
            <person name="Park S.-H."/>
            <person name="Parro V."/>
            <person name="Pohl T.M."/>
            <person name="Portetelle D."/>
            <person name="Porwollik S."/>
            <person name="Prescott A.M."/>
            <person name="Presecan E."/>
            <person name="Pujic P."/>
            <person name="Purnelle B."/>
            <person name="Rapoport G."/>
            <person name="Rey M."/>
            <person name="Reynolds S."/>
            <person name="Rieger M."/>
            <person name="Rivolta C."/>
            <person name="Rocha E."/>
            <person name="Roche B."/>
            <person name="Rose M."/>
            <person name="Sadaie Y."/>
            <person name="Sato T."/>
            <person name="Scanlan E."/>
            <person name="Schleich S."/>
            <person name="Schroeter R."/>
            <person name="Scoffone F."/>
            <person name="Sekiguchi J."/>
            <person name="Sekowska A."/>
            <person name="Seror S.J."/>
            <person name="Serror P."/>
            <person name="Shin B.-S."/>
            <person name="Soldo B."/>
            <person name="Sorokin A."/>
            <person name="Tacconi E."/>
            <person name="Takagi T."/>
            <person name="Takahashi H."/>
            <person name="Takemaru K."/>
            <person name="Takeuchi M."/>
            <person name="Tamakoshi A."/>
            <person name="Tanaka T."/>
            <person name="Terpstra P."/>
            <person name="Tognoni A."/>
            <person name="Tosato V."/>
            <person name="Uchiyama S."/>
            <person name="Vandenbol M."/>
            <person name="Vannier F."/>
            <person name="Vassarotti A."/>
            <person name="Viari A."/>
            <person name="Wambutt R."/>
            <person name="Wedler E."/>
            <person name="Wedler H."/>
            <person name="Weitzenegger T."/>
            <person name="Winters P."/>
            <person name="Wipat A."/>
            <person name="Yamamoto H."/>
            <person name="Yamane K."/>
            <person name="Yasumoto K."/>
            <person name="Yata K."/>
            <person name="Yoshida K."/>
            <person name="Yoshikawa H.-F."/>
            <person name="Zumstein E."/>
            <person name="Yoshikawa H."/>
            <person name="Danchin A."/>
        </authorList>
    </citation>
    <scope>NUCLEOTIDE SEQUENCE [LARGE SCALE GENOMIC DNA]</scope>
    <source>
        <strain>168</strain>
    </source>
</reference>
<name>YOYI_BACSU</name>
<sequence length="76" mass="8285">MLKVAKISVSCIVLVLCIYSLFNQNELLLIVVQLFVAALLSLVGVEAILSKQKLSEYLLFGSAAFLLVVNGVKFII</sequence>
<feature type="chain" id="PRO_0000386667" description="Uncharacterized membrane protein YoyI">
    <location>
        <begin position="1"/>
        <end position="76"/>
    </location>
</feature>
<feature type="transmembrane region" description="Helical" evidence="1">
    <location>
        <begin position="2"/>
        <end position="22"/>
    </location>
</feature>
<feature type="transmembrane region" description="Helical" evidence="1">
    <location>
        <begin position="28"/>
        <end position="48"/>
    </location>
</feature>
<feature type="transmembrane region" description="Helical" evidence="1">
    <location>
        <begin position="56"/>
        <end position="76"/>
    </location>
</feature>
<organism>
    <name type="scientific">Bacillus subtilis (strain 168)</name>
    <dbReference type="NCBI Taxonomy" id="224308"/>
    <lineage>
        <taxon>Bacteria</taxon>
        <taxon>Bacillati</taxon>
        <taxon>Bacillota</taxon>
        <taxon>Bacilli</taxon>
        <taxon>Bacillales</taxon>
        <taxon>Bacillaceae</taxon>
        <taxon>Bacillus</taxon>
    </lineage>
</organism>
<accession>C0H438</accession>
<proteinExistence type="predicted"/>
<evidence type="ECO:0000255" key="1"/>
<evidence type="ECO:0000305" key="2"/>
<comment type="subcellular location">
    <subcellularLocation>
        <location evidence="2">Cell membrane</location>
        <topology evidence="2">Multi-pass membrane protein</topology>
    </subcellularLocation>
</comment>
<keyword id="KW-1003">Cell membrane</keyword>
<keyword id="KW-0472">Membrane</keyword>
<keyword id="KW-1185">Reference proteome</keyword>
<keyword id="KW-0812">Transmembrane</keyword>
<keyword id="KW-1133">Transmembrane helix</keyword>
<dbReference type="EMBL" id="AL009126">
    <property type="protein sequence ID" value="CAX52646.1"/>
    <property type="molecule type" value="Genomic_DNA"/>
</dbReference>
<dbReference type="RefSeq" id="WP_009967511.1">
    <property type="nucleotide sequence ID" value="NZ_OZ025638.1"/>
</dbReference>
<dbReference type="RefSeq" id="YP_003097749.1">
    <property type="nucleotide sequence ID" value="NC_000964.3"/>
</dbReference>
<dbReference type="SMR" id="C0H438"/>
<dbReference type="FunCoup" id="C0H438">
    <property type="interactions" value="1"/>
</dbReference>
<dbReference type="STRING" id="224308.BSU20929"/>
<dbReference type="PaxDb" id="224308-BSU20929"/>
<dbReference type="EnsemblBacteria" id="CAX52646">
    <property type="protein sequence ID" value="CAX52646"/>
    <property type="gene ID" value="BSU_20929"/>
</dbReference>
<dbReference type="GeneID" id="8302920"/>
<dbReference type="KEGG" id="bsu:BSU20929"/>
<dbReference type="PATRIC" id="fig|224308.179.peg.2284"/>
<dbReference type="InParanoid" id="C0H438"/>
<dbReference type="OrthoDB" id="2926882at2"/>
<dbReference type="BioCyc" id="BSUB:BSU20929-MONOMER"/>
<dbReference type="Proteomes" id="UP000001570">
    <property type="component" value="Chromosome"/>
</dbReference>
<dbReference type="GO" id="GO:0005886">
    <property type="term" value="C:plasma membrane"/>
    <property type="evidence" value="ECO:0007669"/>
    <property type="project" value="UniProtKB-SubCell"/>
</dbReference>
<gene>
    <name type="primary">yoyI</name>
    <name type="ordered locus">BSU20929</name>
</gene>